<gene>
    <name type="primary">PER44</name>
    <name type="synonym">P44</name>
    <name type="ordered locus">At4g26010</name>
    <name type="ORF">F20B18.120</name>
</gene>
<organism>
    <name type="scientific">Arabidopsis thaliana</name>
    <name type="common">Mouse-ear cress</name>
    <dbReference type="NCBI Taxonomy" id="3702"/>
    <lineage>
        <taxon>Eukaryota</taxon>
        <taxon>Viridiplantae</taxon>
        <taxon>Streptophyta</taxon>
        <taxon>Embryophyta</taxon>
        <taxon>Tracheophyta</taxon>
        <taxon>Spermatophyta</taxon>
        <taxon>Magnoliopsida</taxon>
        <taxon>eudicotyledons</taxon>
        <taxon>Gunneridae</taxon>
        <taxon>Pentapetalae</taxon>
        <taxon>rosids</taxon>
        <taxon>malvids</taxon>
        <taxon>Brassicales</taxon>
        <taxon>Brassicaceae</taxon>
        <taxon>Camelineae</taxon>
        <taxon>Arabidopsis</taxon>
    </lineage>
</organism>
<feature type="signal peptide" evidence="1">
    <location>
        <begin position="1"/>
        <end position="20"/>
    </location>
</feature>
<feature type="chain" id="PRO_0000023710" description="Peroxidase 44">
    <location>
        <begin position="21"/>
        <end position="310"/>
    </location>
</feature>
<feature type="active site" description="Proton acceptor" evidence="2 3">
    <location>
        <position position="62"/>
    </location>
</feature>
<feature type="binding site" evidence="2">
    <location>
        <position position="63"/>
    </location>
    <ligand>
        <name>Ca(2+)</name>
        <dbReference type="ChEBI" id="CHEBI:29108"/>
        <label>1</label>
    </ligand>
</feature>
<feature type="binding site" evidence="2">
    <location>
        <position position="66"/>
    </location>
    <ligand>
        <name>Ca(2+)</name>
        <dbReference type="ChEBI" id="CHEBI:29108"/>
        <label>1</label>
    </ligand>
</feature>
<feature type="binding site" evidence="2">
    <location>
        <position position="68"/>
    </location>
    <ligand>
        <name>Ca(2+)</name>
        <dbReference type="ChEBI" id="CHEBI:29108"/>
        <label>1</label>
    </ligand>
</feature>
<feature type="binding site" evidence="2">
    <location>
        <position position="70"/>
    </location>
    <ligand>
        <name>Ca(2+)</name>
        <dbReference type="ChEBI" id="CHEBI:29108"/>
        <label>1</label>
    </ligand>
</feature>
<feature type="binding site" evidence="2">
    <location>
        <position position="72"/>
    </location>
    <ligand>
        <name>Ca(2+)</name>
        <dbReference type="ChEBI" id="CHEBI:29108"/>
        <label>1</label>
    </ligand>
</feature>
<feature type="binding site" evidence="2">
    <location>
        <position position="156"/>
    </location>
    <ligand>
        <name>substrate</name>
    </ligand>
</feature>
<feature type="binding site" description="axial binding residue" evidence="2">
    <location>
        <position position="187"/>
    </location>
    <ligand>
        <name>heme b</name>
        <dbReference type="ChEBI" id="CHEBI:60344"/>
    </ligand>
    <ligandPart>
        <name>Fe</name>
        <dbReference type="ChEBI" id="CHEBI:18248"/>
    </ligandPart>
</feature>
<feature type="binding site" evidence="2">
    <location>
        <position position="188"/>
    </location>
    <ligand>
        <name>Ca(2+)</name>
        <dbReference type="ChEBI" id="CHEBI:29108"/>
        <label>2</label>
    </ligand>
</feature>
<feature type="binding site" evidence="2">
    <location>
        <position position="229"/>
    </location>
    <ligand>
        <name>Ca(2+)</name>
        <dbReference type="ChEBI" id="CHEBI:29108"/>
        <label>2</label>
    </ligand>
</feature>
<feature type="binding site" evidence="2">
    <location>
        <position position="232"/>
    </location>
    <ligand>
        <name>Ca(2+)</name>
        <dbReference type="ChEBI" id="CHEBI:29108"/>
        <label>2</label>
    </ligand>
</feature>
<feature type="binding site" evidence="2">
    <location>
        <position position="237"/>
    </location>
    <ligand>
        <name>Ca(2+)</name>
        <dbReference type="ChEBI" id="CHEBI:29108"/>
        <label>2</label>
    </ligand>
</feature>
<feature type="site" description="Transition state stabilizer" evidence="2">
    <location>
        <position position="58"/>
    </location>
</feature>
<feature type="disulfide bond" evidence="2">
    <location>
        <begin position="31"/>
        <end position="110"/>
    </location>
</feature>
<feature type="disulfide bond" evidence="2">
    <location>
        <begin position="64"/>
        <end position="69"/>
    </location>
</feature>
<feature type="disulfide bond" evidence="2">
    <location>
        <begin position="116"/>
        <end position="305"/>
    </location>
</feature>
<feature type="disulfide bond" evidence="2">
    <location>
        <begin position="194"/>
        <end position="218"/>
    </location>
</feature>
<protein>
    <recommendedName>
        <fullName>Peroxidase 44</fullName>
        <shortName>Atperox P44</shortName>
        <ecNumber>1.11.1.7</ecNumber>
    </recommendedName>
    <alternativeName>
        <fullName>ATP35</fullName>
    </alternativeName>
</protein>
<accession>Q93V93</accession>
<accession>Q9SZH5</accession>
<comment type="function">
    <text>Removal of H(2)O(2), oxidation of toxic reductants, biosynthesis and degradation of lignin, suberization, auxin catabolism, response to environmental stresses such as wounding, pathogen attack and oxidative stress. These functions might be dependent on each isozyme/isoform in each plant tissue.</text>
</comment>
<comment type="catalytic activity">
    <reaction>
        <text>2 a phenolic donor + H2O2 = 2 a phenolic radical donor + 2 H2O</text>
        <dbReference type="Rhea" id="RHEA:56136"/>
        <dbReference type="ChEBI" id="CHEBI:15377"/>
        <dbReference type="ChEBI" id="CHEBI:16240"/>
        <dbReference type="ChEBI" id="CHEBI:139520"/>
        <dbReference type="ChEBI" id="CHEBI:139521"/>
        <dbReference type="EC" id="1.11.1.7"/>
    </reaction>
</comment>
<comment type="cofactor">
    <cofactor evidence="2">
        <name>heme b</name>
        <dbReference type="ChEBI" id="CHEBI:60344"/>
    </cofactor>
    <text evidence="2">Binds 1 heme b (iron(II)-protoporphyrin IX) group per subunit.</text>
</comment>
<comment type="cofactor">
    <cofactor evidence="2">
        <name>Ca(2+)</name>
        <dbReference type="ChEBI" id="CHEBI:29108"/>
    </cofactor>
    <text evidence="2">Binds 2 calcium ions per subunit.</text>
</comment>
<comment type="subcellular location">
    <subcellularLocation>
        <location evidence="2">Secreted</location>
    </subcellularLocation>
</comment>
<comment type="miscellaneous">
    <text>There are 73 peroxidase genes in A.thaliana.</text>
</comment>
<comment type="similarity">
    <text evidence="2">Belongs to the peroxidase family. Classical plant (class III) peroxidase subfamily.</text>
</comment>
<comment type="sequence caution" evidence="4">
    <conflict type="erroneous gene model prediction">
        <sequence resource="EMBL-CDS" id="CAB39666"/>
    </conflict>
</comment>
<comment type="sequence caution" evidence="4">
    <conflict type="erroneous gene model prediction">
        <sequence resource="EMBL-CDS" id="CAB79456"/>
    </conflict>
</comment>
<proteinExistence type="evidence at transcript level"/>
<name>PER44_ARATH</name>
<keyword id="KW-0106">Calcium</keyword>
<keyword id="KW-1015">Disulfide bond</keyword>
<keyword id="KW-0349">Heme</keyword>
<keyword id="KW-0376">Hydrogen peroxide</keyword>
<keyword id="KW-0408">Iron</keyword>
<keyword id="KW-0479">Metal-binding</keyword>
<keyword id="KW-0560">Oxidoreductase</keyword>
<keyword id="KW-0575">Peroxidase</keyword>
<keyword id="KW-1185">Reference proteome</keyword>
<keyword id="KW-0964">Secreted</keyword>
<keyword id="KW-0732">Signal</keyword>
<dbReference type="EC" id="1.11.1.7"/>
<dbReference type="EMBL" id="AF452386">
    <property type="protein sequence ID" value="AAL40850.1"/>
    <property type="molecule type" value="mRNA"/>
</dbReference>
<dbReference type="EMBL" id="AL049483">
    <property type="protein sequence ID" value="CAB39666.1"/>
    <property type="status" value="ALT_SEQ"/>
    <property type="molecule type" value="Genomic_DNA"/>
</dbReference>
<dbReference type="EMBL" id="AL161564">
    <property type="protein sequence ID" value="CAB79456.1"/>
    <property type="status" value="ALT_SEQ"/>
    <property type="molecule type" value="Genomic_DNA"/>
</dbReference>
<dbReference type="EMBL" id="CP002687">
    <property type="protein sequence ID" value="AEE85144.1"/>
    <property type="molecule type" value="Genomic_DNA"/>
</dbReference>
<dbReference type="EMBL" id="AF412066">
    <property type="protein sequence ID" value="AAL06519.1"/>
    <property type="molecule type" value="mRNA"/>
</dbReference>
<dbReference type="EMBL" id="AF428430">
    <property type="protein sequence ID" value="AAL16199.1"/>
    <property type="molecule type" value="mRNA"/>
</dbReference>
<dbReference type="EMBL" id="AY090260">
    <property type="protein sequence ID" value="AAL90921.1"/>
    <property type="molecule type" value="mRNA"/>
</dbReference>
<dbReference type="PIR" id="T04256">
    <property type="entry name" value="T04256"/>
</dbReference>
<dbReference type="RefSeq" id="NP_567738.1">
    <property type="nucleotide sequence ID" value="NM_118734.2"/>
</dbReference>
<dbReference type="SMR" id="Q93V93"/>
<dbReference type="FunCoup" id="Q93V93">
    <property type="interactions" value="317"/>
</dbReference>
<dbReference type="STRING" id="3702.Q93V93"/>
<dbReference type="PeroxiBase" id="210">
    <property type="entry name" value="AtPrx44"/>
</dbReference>
<dbReference type="GlyGen" id="Q93V93">
    <property type="glycosylation" value="1 site"/>
</dbReference>
<dbReference type="PaxDb" id="3702-AT4G26010.1"/>
<dbReference type="EnsemblPlants" id="AT4G26010.1">
    <property type="protein sequence ID" value="AT4G26010.1"/>
    <property type="gene ID" value="AT4G26010"/>
</dbReference>
<dbReference type="GeneID" id="828707"/>
<dbReference type="Gramene" id="AT4G26010.1">
    <property type="protein sequence ID" value="AT4G26010.1"/>
    <property type="gene ID" value="AT4G26010"/>
</dbReference>
<dbReference type="KEGG" id="ath:AT4G26010"/>
<dbReference type="Araport" id="AT4G26010"/>
<dbReference type="TAIR" id="AT4G26010"/>
<dbReference type="eggNOG" id="ENOG502SHC9">
    <property type="taxonomic scope" value="Eukaryota"/>
</dbReference>
<dbReference type="HOGENOM" id="CLU_010543_0_3_1"/>
<dbReference type="InParanoid" id="Q93V93"/>
<dbReference type="OMA" id="QAFTAKG"/>
<dbReference type="OrthoDB" id="1031916at2759"/>
<dbReference type="PhylomeDB" id="Q93V93"/>
<dbReference type="PRO" id="PR:Q93V93"/>
<dbReference type="Proteomes" id="UP000006548">
    <property type="component" value="Chromosome 4"/>
</dbReference>
<dbReference type="ExpressionAtlas" id="Q93V93">
    <property type="expression patterns" value="baseline and differential"/>
</dbReference>
<dbReference type="GO" id="GO:0005576">
    <property type="term" value="C:extracellular region"/>
    <property type="evidence" value="ECO:0007669"/>
    <property type="project" value="UniProtKB-SubCell"/>
</dbReference>
<dbReference type="GO" id="GO:0020037">
    <property type="term" value="F:heme binding"/>
    <property type="evidence" value="ECO:0007669"/>
    <property type="project" value="InterPro"/>
</dbReference>
<dbReference type="GO" id="GO:0140825">
    <property type="term" value="F:lactoperoxidase activity"/>
    <property type="evidence" value="ECO:0007669"/>
    <property type="project" value="UniProtKB-EC"/>
</dbReference>
<dbReference type="GO" id="GO:0046872">
    <property type="term" value="F:metal ion binding"/>
    <property type="evidence" value="ECO:0007669"/>
    <property type="project" value="UniProtKB-KW"/>
</dbReference>
<dbReference type="GO" id="GO:0042744">
    <property type="term" value="P:hydrogen peroxide catabolic process"/>
    <property type="evidence" value="ECO:0007669"/>
    <property type="project" value="UniProtKB-KW"/>
</dbReference>
<dbReference type="GO" id="GO:0006979">
    <property type="term" value="P:response to oxidative stress"/>
    <property type="evidence" value="ECO:0007669"/>
    <property type="project" value="InterPro"/>
</dbReference>
<dbReference type="CDD" id="cd00693">
    <property type="entry name" value="secretory_peroxidase"/>
    <property type="match status" value="1"/>
</dbReference>
<dbReference type="FunFam" id="1.10.420.10:FF:000007">
    <property type="entry name" value="Peroxidase"/>
    <property type="match status" value="1"/>
</dbReference>
<dbReference type="FunFam" id="1.10.520.10:FF:000008">
    <property type="entry name" value="Peroxidase"/>
    <property type="match status" value="1"/>
</dbReference>
<dbReference type="Gene3D" id="1.10.520.10">
    <property type="match status" value="1"/>
</dbReference>
<dbReference type="Gene3D" id="1.10.420.10">
    <property type="entry name" value="Peroxidase, domain 2"/>
    <property type="match status" value="1"/>
</dbReference>
<dbReference type="InterPro" id="IPR002016">
    <property type="entry name" value="Haem_peroxidase"/>
</dbReference>
<dbReference type="InterPro" id="IPR010255">
    <property type="entry name" value="Haem_peroxidase_sf"/>
</dbReference>
<dbReference type="InterPro" id="IPR000823">
    <property type="entry name" value="Peroxidase_pln"/>
</dbReference>
<dbReference type="InterPro" id="IPR019794">
    <property type="entry name" value="Peroxidases_AS"/>
</dbReference>
<dbReference type="InterPro" id="IPR033905">
    <property type="entry name" value="Secretory_peroxidase"/>
</dbReference>
<dbReference type="PANTHER" id="PTHR31517">
    <property type="match status" value="1"/>
</dbReference>
<dbReference type="PANTHER" id="PTHR31517:SF59">
    <property type="entry name" value="PEROXIDASE"/>
    <property type="match status" value="1"/>
</dbReference>
<dbReference type="Pfam" id="PF00141">
    <property type="entry name" value="peroxidase"/>
    <property type="match status" value="1"/>
</dbReference>
<dbReference type="PRINTS" id="PR00458">
    <property type="entry name" value="PEROXIDASE"/>
</dbReference>
<dbReference type="PRINTS" id="PR00461">
    <property type="entry name" value="PLPEROXIDASE"/>
</dbReference>
<dbReference type="SUPFAM" id="SSF48113">
    <property type="entry name" value="Heme-dependent peroxidases"/>
    <property type="match status" value="1"/>
</dbReference>
<dbReference type="PROSITE" id="PS00436">
    <property type="entry name" value="PEROXIDASE_2"/>
    <property type="match status" value="1"/>
</dbReference>
<dbReference type="PROSITE" id="PS50873">
    <property type="entry name" value="PEROXIDASE_4"/>
    <property type="match status" value="1"/>
</dbReference>
<sequence>MRSITALFFLFCFLAPSALAQLRTGFYSRSCPRAESIVASVVANRFRSDKSITAAFLRMQFHDCFVRGCDASLLIDPRPGRPSEKSTGPNASVRGYEIIDEAKRQLEAACPRTVSCADIVTLATRDSVALAGGPRFSVPTGRRDGLRSNPNDVNLPGPTIPVSASIQLFAAQGMNTNDMVTLIGGGHSVGVAHCSLFQDRLSDRAMEPSLKSSLRRKCSSPNDPTTFLDQKTSFTVDNAIYGEIRRQRGILRIDQNLGLDRSTSGIVSGYASSNTLFRKRFAEALVKMGTIKVLTGRSGEIRRNCRVFNN</sequence>
<reference key="1">
    <citation type="journal article" date="2002" name="Eur. J. Biochem.">
        <title>Structural diversity and transcription of class III peroxidases from Arabidopsis thaliana.</title>
        <authorList>
            <person name="Welinder K.G."/>
            <person name="Justesen A.F."/>
            <person name="Kjaersgaard I.V.H."/>
            <person name="Jensen R.B."/>
            <person name="Rasmussen S.K."/>
            <person name="Jespersen H.M."/>
            <person name="Duroux L."/>
        </authorList>
    </citation>
    <scope>NUCLEOTIDE SEQUENCE [MRNA]</scope>
    <source>
        <strain>cv. Columbia</strain>
    </source>
</reference>
<reference key="2">
    <citation type="journal article" date="1999" name="Nature">
        <title>Sequence and analysis of chromosome 4 of the plant Arabidopsis thaliana.</title>
        <authorList>
            <person name="Mayer K.F.X."/>
            <person name="Schueller C."/>
            <person name="Wambutt R."/>
            <person name="Murphy G."/>
            <person name="Volckaert G."/>
            <person name="Pohl T."/>
            <person name="Duesterhoeft A."/>
            <person name="Stiekema W."/>
            <person name="Entian K.-D."/>
            <person name="Terryn N."/>
            <person name="Harris B."/>
            <person name="Ansorge W."/>
            <person name="Brandt P."/>
            <person name="Grivell L.A."/>
            <person name="Rieger M."/>
            <person name="Weichselgartner M."/>
            <person name="de Simone V."/>
            <person name="Obermaier B."/>
            <person name="Mache R."/>
            <person name="Mueller M."/>
            <person name="Kreis M."/>
            <person name="Delseny M."/>
            <person name="Puigdomenech P."/>
            <person name="Watson M."/>
            <person name="Schmidtheini T."/>
            <person name="Reichert B."/>
            <person name="Portetelle D."/>
            <person name="Perez-Alonso M."/>
            <person name="Boutry M."/>
            <person name="Bancroft I."/>
            <person name="Vos P."/>
            <person name="Hoheisel J."/>
            <person name="Zimmermann W."/>
            <person name="Wedler H."/>
            <person name="Ridley P."/>
            <person name="Langham S.-A."/>
            <person name="McCullagh B."/>
            <person name="Bilham L."/>
            <person name="Robben J."/>
            <person name="van der Schueren J."/>
            <person name="Grymonprez B."/>
            <person name="Chuang Y.-J."/>
            <person name="Vandenbussche F."/>
            <person name="Braeken M."/>
            <person name="Weltjens I."/>
            <person name="Voet M."/>
            <person name="Bastiaens I."/>
            <person name="Aert R."/>
            <person name="Defoor E."/>
            <person name="Weitzenegger T."/>
            <person name="Bothe G."/>
            <person name="Ramsperger U."/>
            <person name="Hilbert H."/>
            <person name="Braun M."/>
            <person name="Holzer E."/>
            <person name="Brandt A."/>
            <person name="Peters S."/>
            <person name="van Staveren M."/>
            <person name="Dirkse W."/>
            <person name="Mooijman P."/>
            <person name="Klein Lankhorst R."/>
            <person name="Rose M."/>
            <person name="Hauf J."/>
            <person name="Koetter P."/>
            <person name="Berneiser S."/>
            <person name="Hempel S."/>
            <person name="Feldpausch M."/>
            <person name="Lamberth S."/>
            <person name="Van den Daele H."/>
            <person name="De Keyser A."/>
            <person name="Buysshaert C."/>
            <person name="Gielen J."/>
            <person name="Villarroel R."/>
            <person name="De Clercq R."/>
            <person name="van Montagu M."/>
            <person name="Rogers J."/>
            <person name="Cronin A."/>
            <person name="Quail M.A."/>
            <person name="Bray-Allen S."/>
            <person name="Clark L."/>
            <person name="Doggett J."/>
            <person name="Hall S."/>
            <person name="Kay M."/>
            <person name="Lennard N."/>
            <person name="McLay K."/>
            <person name="Mayes R."/>
            <person name="Pettett A."/>
            <person name="Rajandream M.A."/>
            <person name="Lyne M."/>
            <person name="Benes V."/>
            <person name="Rechmann S."/>
            <person name="Borkova D."/>
            <person name="Bloecker H."/>
            <person name="Scharfe M."/>
            <person name="Grimm M."/>
            <person name="Loehnert T.-H."/>
            <person name="Dose S."/>
            <person name="de Haan M."/>
            <person name="Maarse A.C."/>
            <person name="Schaefer M."/>
            <person name="Mueller-Auer S."/>
            <person name="Gabel C."/>
            <person name="Fuchs M."/>
            <person name="Fartmann B."/>
            <person name="Granderath K."/>
            <person name="Dauner D."/>
            <person name="Herzl A."/>
            <person name="Neumann S."/>
            <person name="Argiriou A."/>
            <person name="Vitale D."/>
            <person name="Liguori R."/>
            <person name="Piravandi E."/>
            <person name="Massenet O."/>
            <person name="Quigley F."/>
            <person name="Clabauld G."/>
            <person name="Muendlein A."/>
            <person name="Felber R."/>
            <person name="Schnabl S."/>
            <person name="Hiller R."/>
            <person name="Schmidt W."/>
            <person name="Lecharny A."/>
            <person name="Aubourg S."/>
            <person name="Chefdor F."/>
            <person name="Cooke R."/>
            <person name="Berger C."/>
            <person name="Monfort A."/>
            <person name="Casacuberta E."/>
            <person name="Gibbons T."/>
            <person name="Weber N."/>
            <person name="Vandenbol M."/>
            <person name="Bargues M."/>
            <person name="Terol J."/>
            <person name="Torres A."/>
            <person name="Perez-Perez A."/>
            <person name="Purnelle B."/>
            <person name="Bent E."/>
            <person name="Johnson S."/>
            <person name="Tacon D."/>
            <person name="Jesse T."/>
            <person name="Heijnen L."/>
            <person name="Schwarz S."/>
            <person name="Scholler P."/>
            <person name="Heber S."/>
            <person name="Francs P."/>
            <person name="Bielke C."/>
            <person name="Frishman D."/>
            <person name="Haase D."/>
            <person name="Lemcke K."/>
            <person name="Mewes H.-W."/>
            <person name="Stocker S."/>
            <person name="Zaccaria P."/>
            <person name="Bevan M."/>
            <person name="Wilson R.K."/>
            <person name="de la Bastide M."/>
            <person name="Habermann K."/>
            <person name="Parnell L."/>
            <person name="Dedhia N."/>
            <person name="Gnoj L."/>
            <person name="Schutz K."/>
            <person name="Huang E."/>
            <person name="Spiegel L."/>
            <person name="Sekhon M."/>
            <person name="Murray J."/>
            <person name="Sheet P."/>
            <person name="Cordes M."/>
            <person name="Abu-Threideh J."/>
            <person name="Stoneking T."/>
            <person name="Kalicki J."/>
            <person name="Graves T."/>
            <person name="Harmon G."/>
            <person name="Edwards J."/>
            <person name="Latreille P."/>
            <person name="Courtney L."/>
            <person name="Cloud J."/>
            <person name="Abbott A."/>
            <person name="Scott K."/>
            <person name="Johnson D."/>
            <person name="Minx P."/>
            <person name="Bentley D."/>
            <person name="Fulton B."/>
            <person name="Miller N."/>
            <person name="Greco T."/>
            <person name="Kemp K."/>
            <person name="Kramer J."/>
            <person name="Fulton L."/>
            <person name="Mardis E."/>
            <person name="Dante M."/>
            <person name="Pepin K."/>
            <person name="Hillier L.W."/>
            <person name="Nelson J."/>
            <person name="Spieth J."/>
            <person name="Ryan E."/>
            <person name="Andrews S."/>
            <person name="Geisel C."/>
            <person name="Layman D."/>
            <person name="Du H."/>
            <person name="Ali J."/>
            <person name="Berghoff A."/>
            <person name="Jones K."/>
            <person name="Drone K."/>
            <person name="Cotton M."/>
            <person name="Joshu C."/>
            <person name="Antonoiu B."/>
            <person name="Zidanic M."/>
            <person name="Strong C."/>
            <person name="Sun H."/>
            <person name="Lamar B."/>
            <person name="Yordan C."/>
            <person name="Ma P."/>
            <person name="Zhong J."/>
            <person name="Preston R."/>
            <person name="Vil D."/>
            <person name="Shekher M."/>
            <person name="Matero A."/>
            <person name="Shah R."/>
            <person name="Swaby I.K."/>
            <person name="O'Shaughnessy A."/>
            <person name="Rodriguez M."/>
            <person name="Hoffman J."/>
            <person name="Till S."/>
            <person name="Granat S."/>
            <person name="Shohdy N."/>
            <person name="Hasegawa A."/>
            <person name="Hameed A."/>
            <person name="Lodhi M."/>
            <person name="Johnson A."/>
            <person name="Chen E."/>
            <person name="Marra M.A."/>
            <person name="Martienssen R."/>
            <person name="McCombie W.R."/>
        </authorList>
    </citation>
    <scope>NUCLEOTIDE SEQUENCE [LARGE SCALE GENOMIC DNA]</scope>
    <source>
        <strain>cv. Columbia</strain>
    </source>
</reference>
<reference key="3">
    <citation type="journal article" date="2017" name="Plant J.">
        <title>Araport11: a complete reannotation of the Arabidopsis thaliana reference genome.</title>
        <authorList>
            <person name="Cheng C.Y."/>
            <person name="Krishnakumar V."/>
            <person name="Chan A.P."/>
            <person name="Thibaud-Nissen F."/>
            <person name="Schobel S."/>
            <person name="Town C.D."/>
        </authorList>
    </citation>
    <scope>GENOME REANNOTATION</scope>
    <source>
        <strain>cv. Columbia</strain>
    </source>
</reference>
<reference key="4">
    <citation type="journal article" date="2003" name="Science">
        <title>Empirical analysis of transcriptional activity in the Arabidopsis genome.</title>
        <authorList>
            <person name="Yamada K."/>
            <person name="Lim J."/>
            <person name="Dale J.M."/>
            <person name="Chen H."/>
            <person name="Shinn P."/>
            <person name="Palm C.J."/>
            <person name="Southwick A.M."/>
            <person name="Wu H.C."/>
            <person name="Kim C.J."/>
            <person name="Nguyen M."/>
            <person name="Pham P.K."/>
            <person name="Cheuk R.F."/>
            <person name="Karlin-Newmann G."/>
            <person name="Liu S.X."/>
            <person name="Lam B."/>
            <person name="Sakano H."/>
            <person name="Wu T."/>
            <person name="Yu G."/>
            <person name="Miranda M."/>
            <person name="Quach H.L."/>
            <person name="Tripp M."/>
            <person name="Chang C.H."/>
            <person name="Lee J.M."/>
            <person name="Toriumi M.J."/>
            <person name="Chan M.M."/>
            <person name="Tang C.C."/>
            <person name="Onodera C.S."/>
            <person name="Deng J.M."/>
            <person name="Akiyama K."/>
            <person name="Ansari Y."/>
            <person name="Arakawa T."/>
            <person name="Banh J."/>
            <person name="Banno F."/>
            <person name="Bowser L."/>
            <person name="Brooks S.Y."/>
            <person name="Carninci P."/>
            <person name="Chao Q."/>
            <person name="Choy N."/>
            <person name="Enju A."/>
            <person name="Goldsmith A.D."/>
            <person name="Gurjal M."/>
            <person name="Hansen N.F."/>
            <person name="Hayashizaki Y."/>
            <person name="Johnson-Hopson C."/>
            <person name="Hsuan V.W."/>
            <person name="Iida K."/>
            <person name="Karnes M."/>
            <person name="Khan S."/>
            <person name="Koesema E."/>
            <person name="Ishida J."/>
            <person name="Jiang P.X."/>
            <person name="Jones T."/>
            <person name="Kawai J."/>
            <person name="Kamiya A."/>
            <person name="Meyers C."/>
            <person name="Nakajima M."/>
            <person name="Narusaka M."/>
            <person name="Seki M."/>
            <person name="Sakurai T."/>
            <person name="Satou M."/>
            <person name="Tamse R."/>
            <person name="Vaysberg M."/>
            <person name="Wallender E.K."/>
            <person name="Wong C."/>
            <person name="Yamamura Y."/>
            <person name="Yuan S."/>
            <person name="Shinozaki K."/>
            <person name="Davis R.W."/>
            <person name="Theologis A."/>
            <person name="Ecker J.R."/>
        </authorList>
    </citation>
    <scope>NUCLEOTIDE SEQUENCE [LARGE SCALE MRNA]</scope>
    <source>
        <strain>cv. Columbia</strain>
    </source>
</reference>
<reference key="5">
    <citation type="journal article" date="2002" name="Gene">
        <title>Analysis and expression of the class III peroxidase large gene family in Arabidopsis thaliana.</title>
        <authorList>
            <person name="Tognolli M."/>
            <person name="Penel C."/>
            <person name="Greppin H."/>
            <person name="Simon P."/>
        </authorList>
    </citation>
    <scope>GENE FAMILY ORGANIZATION</scope>
    <scope>NOMENCLATURE</scope>
    <source>
        <strain>cv. Columbia</strain>
    </source>
</reference>
<evidence type="ECO:0000255" key="1"/>
<evidence type="ECO:0000255" key="2">
    <source>
        <dbReference type="PROSITE-ProRule" id="PRU00297"/>
    </source>
</evidence>
<evidence type="ECO:0000255" key="3">
    <source>
        <dbReference type="PROSITE-ProRule" id="PRU10012"/>
    </source>
</evidence>
<evidence type="ECO:0000305" key="4"/>